<evidence type="ECO:0000255" key="1">
    <source>
        <dbReference type="PROSITE-ProRule" id="PRU00062"/>
    </source>
</evidence>
<evidence type="ECO:0000255" key="2">
    <source>
        <dbReference type="PROSITE-ProRule" id="PRU00145"/>
    </source>
</evidence>
<evidence type="ECO:0000255" key="3">
    <source>
        <dbReference type="PROSITE-ProRule" id="PRU00192"/>
    </source>
</evidence>
<evidence type="ECO:0000256" key="4">
    <source>
        <dbReference type="SAM" id="MobiDB-lite"/>
    </source>
</evidence>
<evidence type="ECO:0000269" key="5">
    <source>
    </source>
</evidence>
<evidence type="ECO:0000269" key="6">
    <source>
    </source>
</evidence>
<evidence type="ECO:0000269" key="7">
    <source>
    </source>
</evidence>
<evidence type="ECO:0000269" key="8">
    <source>
    </source>
</evidence>
<evidence type="ECO:0000269" key="9">
    <source>
    </source>
</evidence>
<evidence type="ECO:0000269" key="10">
    <source>
    </source>
</evidence>
<evidence type="ECO:0000269" key="11">
    <source>
    </source>
</evidence>
<evidence type="ECO:0000303" key="12">
    <source>
    </source>
</evidence>
<evidence type="ECO:0000303" key="13">
    <source>
    </source>
</evidence>
<evidence type="ECO:0000305" key="14"/>
<evidence type="ECO:0007744" key="15">
    <source>
    </source>
</evidence>
<evidence type="ECO:0007744" key="16">
    <source>
    </source>
</evidence>
<evidence type="ECO:0007744" key="17">
    <source>
    </source>
</evidence>
<evidence type="ECO:0007829" key="18">
    <source>
        <dbReference type="PDB" id="6MYE"/>
    </source>
</evidence>
<evidence type="ECO:0007829" key="19">
    <source>
        <dbReference type="PDB" id="7YKG"/>
    </source>
</evidence>
<accession>Q96DR7</accession>
<accession>B3KVP8</accession>
<accession>E9PBD0</accession>
<accession>Q68CL1</accession>
<accession>Q6AZ96</accession>
<accession>Q6Q8Q8</accession>
<accession>Q96AW8</accession>
<accession>Q96DR6</accession>
<accession>Q9H9D7</accession>
<accession>Q9H9R2</accession>
<accession>Q9UFW5</accession>
<feature type="chain" id="PRO_0000322568" description="Rho guanine nucleotide exchange factor 26">
    <location>
        <begin position="1"/>
        <end position="871"/>
    </location>
</feature>
<feature type="domain" description="DH" evidence="1">
    <location>
        <begin position="439"/>
        <end position="623"/>
    </location>
</feature>
<feature type="domain" description="PH" evidence="2">
    <location>
        <begin position="655"/>
        <end position="782"/>
    </location>
</feature>
<feature type="domain" description="SH3" evidence="3">
    <location>
        <begin position="789"/>
        <end position="850"/>
    </location>
</feature>
<feature type="region of interest" description="Disordered" evidence="4">
    <location>
        <begin position="1"/>
        <end position="49"/>
    </location>
</feature>
<feature type="region of interest" description="Disordered" evidence="4">
    <location>
        <begin position="86"/>
        <end position="233"/>
    </location>
</feature>
<feature type="region of interest" description="Disordered" evidence="4">
    <location>
        <begin position="288"/>
        <end position="310"/>
    </location>
</feature>
<feature type="compositionally biased region" description="Pro residues" evidence="4">
    <location>
        <begin position="136"/>
        <end position="156"/>
    </location>
</feature>
<feature type="compositionally biased region" description="Polar residues" evidence="4">
    <location>
        <begin position="173"/>
        <end position="192"/>
    </location>
</feature>
<feature type="modified residue" description="Phosphoserine" evidence="16">
    <location>
        <position position="22"/>
    </location>
</feature>
<feature type="modified residue" description="Phosphoserine" evidence="15 16 17">
    <location>
        <position position="392"/>
    </location>
</feature>
<feature type="splice variant" id="VSP_031934" description="In isoform 2." evidence="13">
    <original>GLSQTVSQEERKRQEAIFE</original>
    <variation>VILIVGFMEMKDGRLRGGK</variation>
    <location>
        <begin position="428"/>
        <end position="446"/>
    </location>
</feature>
<feature type="splice variant" id="VSP_031935" description="In isoform 2." evidence="13">
    <location>
        <begin position="447"/>
        <end position="871"/>
    </location>
</feature>
<feature type="splice variant" id="VSP_045570" description="In isoform 3." evidence="12">
    <original>SLTQVEIVRSFTAKQPDELSLQVADVVLIYQRVSDGWYEGERLRDGERGWFPMECAKEITCQATIDKNVERMGRLLGLETNV</original>
    <variation>CG</variation>
    <location>
        <begin position="790"/>
        <end position="871"/>
    </location>
</feature>
<feature type="sequence variant" id="VAR_039425" description="In dbSNP:rs12493885." evidence="5 6 7 8 9 16">
    <original>V</original>
    <variation>L</variation>
    <location>
        <position position="29"/>
    </location>
</feature>
<feature type="sequence variant" id="VAR_058205" description="In dbSNP:rs12497267." evidence="8">
    <original>L</original>
    <variation>P</variation>
    <location>
        <position position="60"/>
    </location>
</feature>
<feature type="sequence variant" id="VAR_039426" description="In dbSNP:rs13096373." evidence="8">
    <original>F</original>
    <variation>S</variation>
    <location>
        <position position="203"/>
    </location>
</feature>
<feature type="mutagenesis site" description="Fails to localize at sites of membrane ruffling." evidence="7">
    <original>W</original>
    <variation>R</variation>
    <location>
        <position position="826"/>
    </location>
</feature>
<feature type="sequence conflict" description="In Ref. 1; AAL27001, 2; AAS59842, 3; BAG53860 and 6; AAH78655." evidence="14" ref="1 2 3 6">
    <original>L</original>
    <variation>S</variation>
    <location>
        <position position="60"/>
    </location>
</feature>
<feature type="sequence conflict" description="In Ref. 6; AAH16628." evidence="14" ref="6">
    <original>N</original>
    <variation>K</variation>
    <location>
        <position position="687"/>
    </location>
</feature>
<feature type="sequence conflict" description="In Ref. 6; AAH78655." evidence="14" ref="6">
    <original>S</original>
    <variation>T</variation>
    <location>
        <position position="707"/>
    </location>
</feature>
<feature type="sequence conflict" description="In Ref. 1; AAL27001." evidence="14" ref="1">
    <original>S</original>
    <variation>R</variation>
    <location>
        <position position="781"/>
    </location>
</feature>
<feature type="strand" evidence="18">
    <location>
        <begin position="48"/>
        <end position="51"/>
    </location>
</feature>
<feature type="helix" evidence="19">
    <location>
        <begin position="315"/>
        <end position="320"/>
    </location>
</feature>
<gene>
    <name type="primary">ARHGEF26</name>
    <name type="synonym">SGEF</name>
    <name type="ORF">HMFN1864</name>
</gene>
<comment type="function">
    <text evidence="7 10 11">Activates RhoG GTPase by promoting the exchange of GDP by GTP. Required for the formation of membrane ruffles during macropinocytosis. Required for the formation of cup-like structures during trans-endothelial migration of leukocytes. In case of Salmonella enterica infection, activated by SopB, which induces cytoskeleton rearrangements and promotes bacterial entry.</text>
</comment>
<comment type="subunit">
    <text evidence="7 11">Interacts with ICAM1 and RHOG.</text>
</comment>
<comment type="subcellular location">
    <subcellularLocation>
        <location evidence="7 11">Cell projection</location>
        <location evidence="7 11">Ruffle</location>
    </subcellularLocation>
</comment>
<comment type="alternative products">
    <event type="alternative splicing"/>
    <isoform>
        <id>Q96DR7-1</id>
        <name>1</name>
        <sequence type="displayed"/>
    </isoform>
    <isoform>
        <id>Q96DR7-3</id>
        <name>2</name>
        <sequence type="described" ref="VSP_031934 VSP_031935"/>
    </isoform>
    <isoform>
        <id>Q96DR7-4</id>
        <name>3</name>
        <sequence type="described" ref="VSP_045570"/>
    </isoform>
</comment>
<comment type="tissue specificity">
    <text evidence="5 7">Isoform 1 is broadly expressed, with highest levels in liver (at protein level). Certain mRNA species appear to be specifically expressed in prostate and liver.</text>
</comment>
<comment type="induction">
    <text evidence="5">Certain mRNA species appear to be up-regulated by androgens in prostate cancer cells.</text>
</comment>
<comment type="sequence caution" evidence="14">
    <conflict type="erroneous initiation">
        <sequence resource="EMBL-CDS" id="AAH16628"/>
    </conflict>
    <text>Truncated N-terminus.</text>
</comment>
<comment type="sequence caution" evidence="14">
    <conflict type="miscellaneous discrepancy">
        <sequence resource="EMBL-CDS" id="AAL27002"/>
    </conflict>
    <text>Intron retention.</text>
</comment>
<comment type="sequence caution" evidence="14">
    <conflict type="erroneous initiation">
        <sequence resource="EMBL-CDS" id="BAB14159"/>
    </conflict>
    <text>Truncated N-terminus.</text>
</comment>
<comment type="sequence caution" evidence="14">
    <conflict type="erroneous initiation">
        <sequence resource="EMBL-CDS" id="BAB14292"/>
    </conflict>
    <text>Truncated N-terminus.</text>
</comment>
<dbReference type="EMBL" id="AF415175">
    <property type="protein sequence ID" value="AAL27001.1"/>
    <property type="molecule type" value="mRNA"/>
</dbReference>
<dbReference type="EMBL" id="AF415176">
    <property type="protein sequence ID" value="AAL27002.1"/>
    <property type="status" value="ALT_SEQ"/>
    <property type="molecule type" value="mRNA"/>
</dbReference>
<dbReference type="EMBL" id="AY552599">
    <property type="protein sequence ID" value="AAS59842.1"/>
    <property type="molecule type" value="mRNA"/>
</dbReference>
<dbReference type="EMBL" id="AK022655">
    <property type="protein sequence ID" value="BAB14159.1"/>
    <property type="status" value="ALT_INIT"/>
    <property type="molecule type" value="mRNA"/>
</dbReference>
<dbReference type="EMBL" id="AK022884">
    <property type="protein sequence ID" value="BAB14292.1"/>
    <property type="status" value="ALT_INIT"/>
    <property type="molecule type" value="mRNA"/>
</dbReference>
<dbReference type="EMBL" id="AK123040">
    <property type="protein sequence ID" value="BAG53860.1"/>
    <property type="molecule type" value="mRNA"/>
</dbReference>
<dbReference type="EMBL" id="AB073386">
    <property type="protein sequence ID" value="BAD38637.1"/>
    <property type="molecule type" value="mRNA"/>
</dbReference>
<dbReference type="EMBL" id="AC018452">
    <property type="status" value="NOT_ANNOTATED_CDS"/>
    <property type="molecule type" value="Genomic_DNA"/>
</dbReference>
<dbReference type="EMBL" id="FJ695204">
    <property type="status" value="NOT_ANNOTATED_CDS"/>
    <property type="molecule type" value="Genomic_DNA"/>
</dbReference>
<dbReference type="EMBL" id="BC016628">
    <property type="protein sequence ID" value="AAH16628.1"/>
    <property type="status" value="ALT_INIT"/>
    <property type="molecule type" value="mRNA"/>
</dbReference>
<dbReference type="EMBL" id="BC078655">
    <property type="protein sequence ID" value="AAH78655.1"/>
    <property type="molecule type" value="mRNA"/>
</dbReference>
<dbReference type="EMBL" id="AL117429">
    <property type="protein sequence ID" value="CAB55918.1"/>
    <property type="molecule type" value="mRNA"/>
</dbReference>
<dbReference type="CCDS" id="CCDS46938.1">
    <molecule id="Q96DR7-1"/>
</dbReference>
<dbReference type="CCDS" id="CCDS58858.1">
    <molecule id="Q96DR7-4"/>
</dbReference>
<dbReference type="PIR" id="T17228">
    <property type="entry name" value="T17228"/>
</dbReference>
<dbReference type="RefSeq" id="NP_001238891.1">
    <molecule id="Q96DR7-1"/>
    <property type="nucleotide sequence ID" value="NM_001251962.2"/>
</dbReference>
<dbReference type="RefSeq" id="NP_001238892.1">
    <molecule id="Q96DR7-4"/>
    <property type="nucleotide sequence ID" value="NM_001251963.2"/>
</dbReference>
<dbReference type="RefSeq" id="NP_056410.3">
    <molecule id="Q96DR7-1"/>
    <property type="nucleotide sequence ID" value="NM_015595.3"/>
</dbReference>
<dbReference type="PDB" id="6MYE">
    <property type="method" value="X-ray"/>
    <property type="resolution" value="1.10 A"/>
    <property type="chains" value="B=42-52"/>
</dbReference>
<dbReference type="PDB" id="7YKG">
    <property type="method" value="X-ray"/>
    <property type="resolution" value="2.16 A"/>
    <property type="chains" value="B/D=311-322"/>
</dbReference>
<dbReference type="PDBsum" id="6MYE"/>
<dbReference type="PDBsum" id="7YKG"/>
<dbReference type="SMR" id="Q96DR7"/>
<dbReference type="BioGRID" id="117537">
    <property type="interactions" value="43"/>
</dbReference>
<dbReference type="FunCoup" id="Q96DR7">
    <property type="interactions" value="895"/>
</dbReference>
<dbReference type="IntAct" id="Q96DR7">
    <property type="interactions" value="25"/>
</dbReference>
<dbReference type="STRING" id="9606.ENSP00000348828"/>
<dbReference type="iPTMnet" id="Q96DR7"/>
<dbReference type="PhosphoSitePlus" id="Q96DR7"/>
<dbReference type="BioMuta" id="ARHGEF26"/>
<dbReference type="DMDM" id="317373555"/>
<dbReference type="jPOST" id="Q96DR7"/>
<dbReference type="MassIVE" id="Q96DR7"/>
<dbReference type="PaxDb" id="9606-ENSP00000348828"/>
<dbReference type="PeptideAtlas" id="Q96DR7"/>
<dbReference type="ProteomicsDB" id="19196"/>
<dbReference type="ProteomicsDB" id="76307">
    <molecule id="Q96DR7-1"/>
</dbReference>
<dbReference type="ProteomicsDB" id="76308">
    <molecule id="Q96DR7-3"/>
</dbReference>
<dbReference type="Pumba" id="Q96DR7"/>
<dbReference type="Antibodypedia" id="2847">
    <property type="antibodies" value="87 antibodies from 20 providers"/>
</dbReference>
<dbReference type="DNASU" id="26084"/>
<dbReference type="Ensembl" id="ENST00000356448.8">
    <molecule id="Q96DR7-1"/>
    <property type="protein sequence ID" value="ENSP00000348828.4"/>
    <property type="gene ID" value="ENSG00000114790.13"/>
</dbReference>
<dbReference type="Ensembl" id="ENST00000465093.6">
    <molecule id="Q96DR7-1"/>
    <property type="protein sequence ID" value="ENSP00000423418.1"/>
    <property type="gene ID" value="ENSG00000114790.13"/>
</dbReference>
<dbReference type="Ensembl" id="ENST00000465817.1">
    <molecule id="Q96DR7-3"/>
    <property type="protein sequence ID" value="ENSP00000423295.1"/>
    <property type="gene ID" value="ENSG00000114790.13"/>
</dbReference>
<dbReference type="Ensembl" id="ENST00000496710.5">
    <molecule id="Q96DR7-4"/>
    <property type="protein sequence ID" value="ENSP00000424446.1"/>
    <property type="gene ID" value="ENSG00000114790.13"/>
</dbReference>
<dbReference type="Ensembl" id="ENST00000614308.3">
    <molecule id="Q96DR7-1"/>
    <property type="protein sequence ID" value="ENSP00000481927.1"/>
    <property type="gene ID" value="ENSG00000277101.4"/>
</dbReference>
<dbReference type="Ensembl" id="ENST00000618535.3">
    <molecule id="Q96DR7-1"/>
    <property type="protein sequence ID" value="ENSP00000484367.1"/>
    <property type="gene ID" value="ENSG00000277101.4"/>
</dbReference>
<dbReference type="Ensembl" id="ENST00000629129.2">
    <molecule id="Q96DR7-3"/>
    <property type="protein sequence ID" value="ENSP00000486665.1"/>
    <property type="gene ID" value="ENSG00000277101.4"/>
</dbReference>
<dbReference type="Ensembl" id="ENST00000630729.2">
    <molecule id="Q96DR7-4"/>
    <property type="protein sequence ID" value="ENSP00000487265.1"/>
    <property type="gene ID" value="ENSG00000277101.4"/>
</dbReference>
<dbReference type="GeneID" id="26084"/>
<dbReference type="KEGG" id="hsa:26084"/>
<dbReference type="MANE-Select" id="ENST00000465093.6">
    <property type="protein sequence ID" value="ENSP00000423418.1"/>
    <property type="RefSeq nucleotide sequence ID" value="NM_015595.4"/>
    <property type="RefSeq protein sequence ID" value="NP_056410.3"/>
</dbReference>
<dbReference type="UCSC" id="uc011bog.2">
    <molecule id="Q96DR7-1"/>
    <property type="organism name" value="human"/>
</dbReference>
<dbReference type="AGR" id="HGNC:24490"/>
<dbReference type="CTD" id="26084"/>
<dbReference type="DisGeNET" id="26084"/>
<dbReference type="GeneCards" id="ARHGEF26"/>
<dbReference type="HGNC" id="HGNC:24490">
    <property type="gene designation" value="ARHGEF26"/>
</dbReference>
<dbReference type="HPA" id="ENSG00000114790">
    <property type="expression patterns" value="Low tissue specificity"/>
</dbReference>
<dbReference type="MIM" id="617552">
    <property type="type" value="gene"/>
</dbReference>
<dbReference type="neXtProt" id="NX_Q96DR7"/>
<dbReference type="OpenTargets" id="ENSG00000114790"/>
<dbReference type="VEuPathDB" id="HostDB:ENSG00000114790"/>
<dbReference type="eggNOG" id="KOG3523">
    <property type="taxonomic scope" value="Eukaryota"/>
</dbReference>
<dbReference type="GeneTree" id="ENSGT01030000234571"/>
<dbReference type="HOGENOM" id="CLU_012820_2_0_1"/>
<dbReference type="InParanoid" id="Q96DR7"/>
<dbReference type="OMA" id="SPKYEAC"/>
<dbReference type="OrthoDB" id="27593at2759"/>
<dbReference type="PAN-GO" id="Q96DR7">
    <property type="GO annotations" value="1 GO annotation based on evolutionary models"/>
</dbReference>
<dbReference type="PhylomeDB" id="Q96DR7"/>
<dbReference type="TreeFam" id="TF316357"/>
<dbReference type="PathwayCommons" id="Q96DR7"/>
<dbReference type="Reactome" id="R-HSA-193648">
    <property type="pathway name" value="NRAGE signals death through JNK"/>
</dbReference>
<dbReference type="Reactome" id="R-HSA-416482">
    <property type="pathway name" value="G alpha (12/13) signalling events"/>
</dbReference>
<dbReference type="Reactome" id="R-HSA-9013148">
    <property type="pathway name" value="CDC42 GTPase cycle"/>
</dbReference>
<dbReference type="Reactome" id="R-HSA-9013408">
    <property type="pathway name" value="RHOG GTPase cycle"/>
</dbReference>
<dbReference type="SignaLink" id="Q96DR7"/>
<dbReference type="SIGNOR" id="Q96DR7"/>
<dbReference type="BioGRID-ORCS" id="26084">
    <property type="hits" value="7 hits in 1138 CRISPR screens"/>
</dbReference>
<dbReference type="ChiTaRS" id="ARHGEF26">
    <property type="organism name" value="human"/>
</dbReference>
<dbReference type="GenomeRNAi" id="26084"/>
<dbReference type="Pharos" id="Q96DR7">
    <property type="development level" value="Tbio"/>
</dbReference>
<dbReference type="PRO" id="PR:Q96DR7"/>
<dbReference type="Proteomes" id="UP000005640">
    <property type="component" value="Chromosome 3"/>
</dbReference>
<dbReference type="RNAct" id="Q96DR7">
    <property type="molecule type" value="protein"/>
</dbReference>
<dbReference type="Bgee" id="ENSG00000114790">
    <property type="expression patterns" value="Expressed in lower esophagus muscularis layer and 96 other cell types or tissues"/>
</dbReference>
<dbReference type="ExpressionAtlas" id="Q96DR7">
    <property type="expression patterns" value="baseline and differential"/>
</dbReference>
<dbReference type="GO" id="GO:0005829">
    <property type="term" value="C:cytosol"/>
    <property type="evidence" value="ECO:0000304"/>
    <property type="project" value="Reactome"/>
</dbReference>
<dbReference type="GO" id="GO:0001726">
    <property type="term" value="C:ruffle"/>
    <property type="evidence" value="ECO:0007669"/>
    <property type="project" value="UniProtKB-SubCell"/>
</dbReference>
<dbReference type="GO" id="GO:0005085">
    <property type="term" value="F:guanyl-nucleotide exchange factor activity"/>
    <property type="evidence" value="ECO:0007669"/>
    <property type="project" value="UniProtKB-KW"/>
</dbReference>
<dbReference type="GO" id="GO:0001886">
    <property type="term" value="P:endothelial cell morphogenesis"/>
    <property type="evidence" value="ECO:0007669"/>
    <property type="project" value="Ensembl"/>
</dbReference>
<dbReference type="GO" id="GO:0032956">
    <property type="term" value="P:regulation of actin cytoskeleton organization"/>
    <property type="evidence" value="ECO:0000318"/>
    <property type="project" value="GO_Central"/>
</dbReference>
<dbReference type="GO" id="GO:0097178">
    <property type="term" value="P:ruffle assembly"/>
    <property type="evidence" value="ECO:0007669"/>
    <property type="project" value="Ensembl"/>
</dbReference>
<dbReference type="CDD" id="cd01221">
    <property type="entry name" value="PH_ephexin"/>
    <property type="match status" value="1"/>
</dbReference>
<dbReference type="CDD" id="cd00160">
    <property type="entry name" value="RhoGEF"/>
    <property type="match status" value="1"/>
</dbReference>
<dbReference type="CDD" id="cd11938">
    <property type="entry name" value="SH3_ARHGEF16_26"/>
    <property type="match status" value="1"/>
</dbReference>
<dbReference type="FunFam" id="2.30.29.30:FF:000127">
    <property type="entry name" value="Neuronal guanine nucleotide exchange factor"/>
    <property type="match status" value="1"/>
</dbReference>
<dbReference type="FunFam" id="1.20.900.10:FF:000007">
    <property type="entry name" value="rho guanine nucleotide exchange factor 19"/>
    <property type="match status" value="1"/>
</dbReference>
<dbReference type="FunFam" id="2.30.30.40:FF:000153">
    <property type="entry name" value="rho guanine nucleotide exchange factor 26"/>
    <property type="match status" value="1"/>
</dbReference>
<dbReference type="Gene3D" id="1.20.900.10">
    <property type="entry name" value="Dbl homology (DH) domain"/>
    <property type="match status" value="1"/>
</dbReference>
<dbReference type="Gene3D" id="2.30.29.30">
    <property type="entry name" value="Pleckstrin-homology domain (PH domain)/Phosphotyrosine-binding domain (PTB)"/>
    <property type="match status" value="1"/>
</dbReference>
<dbReference type="Gene3D" id="2.30.30.40">
    <property type="entry name" value="SH3 Domains"/>
    <property type="match status" value="1"/>
</dbReference>
<dbReference type="InterPro" id="IPR035797">
    <property type="entry name" value="ARHGEF16/ARHGEF26_SH3"/>
</dbReference>
<dbReference type="InterPro" id="IPR035899">
    <property type="entry name" value="DBL_dom_sf"/>
</dbReference>
<dbReference type="InterPro" id="IPR000219">
    <property type="entry name" value="DH_dom"/>
</dbReference>
<dbReference type="InterPro" id="IPR047271">
    <property type="entry name" value="Ephexin-like"/>
</dbReference>
<dbReference type="InterPro" id="IPR011993">
    <property type="entry name" value="PH-like_dom_sf"/>
</dbReference>
<dbReference type="InterPro" id="IPR001849">
    <property type="entry name" value="PH_domain"/>
</dbReference>
<dbReference type="InterPro" id="IPR047270">
    <property type="entry name" value="PH_ephexin"/>
</dbReference>
<dbReference type="InterPro" id="IPR036028">
    <property type="entry name" value="SH3-like_dom_sf"/>
</dbReference>
<dbReference type="InterPro" id="IPR001452">
    <property type="entry name" value="SH3_domain"/>
</dbReference>
<dbReference type="InterPro" id="IPR055251">
    <property type="entry name" value="SOS1_NGEF_PH"/>
</dbReference>
<dbReference type="PANTHER" id="PTHR12845">
    <property type="entry name" value="GUANINE NUCLEOTIDE EXCHANGE FACTOR"/>
    <property type="match status" value="1"/>
</dbReference>
<dbReference type="PANTHER" id="PTHR12845:SF4">
    <property type="entry name" value="RHO GUANINE NUCLEOTIDE EXCHANGE FACTOR 26"/>
    <property type="match status" value="1"/>
</dbReference>
<dbReference type="Pfam" id="PF00621">
    <property type="entry name" value="RhoGEF"/>
    <property type="match status" value="1"/>
</dbReference>
<dbReference type="Pfam" id="PF00018">
    <property type="entry name" value="SH3_1"/>
    <property type="match status" value="1"/>
</dbReference>
<dbReference type="Pfam" id="PF22697">
    <property type="entry name" value="SOS1_NGEF_PH"/>
    <property type="match status" value="1"/>
</dbReference>
<dbReference type="SMART" id="SM00233">
    <property type="entry name" value="PH"/>
    <property type="match status" value="1"/>
</dbReference>
<dbReference type="SMART" id="SM00325">
    <property type="entry name" value="RhoGEF"/>
    <property type="match status" value="1"/>
</dbReference>
<dbReference type="SMART" id="SM00326">
    <property type="entry name" value="SH3"/>
    <property type="match status" value="1"/>
</dbReference>
<dbReference type="SUPFAM" id="SSF48065">
    <property type="entry name" value="DBL homology domain (DH-domain)"/>
    <property type="match status" value="1"/>
</dbReference>
<dbReference type="SUPFAM" id="SSF50729">
    <property type="entry name" value="PH domain-like"/>
    <property type="match status" value="1"/>
</dbReference>
<dbReference type="SUPFAM" id="SSF50044">
    <property type="entry name" value="SH3-domain"/>
    <property type="match status" value="1"/>
</dbReference>
<dbReference type="PROSITE" id="PS50010">
    <property type="entry name" value="DH_2"/>
    <property type="match status" value="1"/>
</dbReference>
<dbReference type="PROSITE" id="PS50003">
    <property type="entry name" value="PH_DOMAIN"/>
    <property type="match status" value="1"/>
</dbReference>
<dbReference type="PROSITE" id="PS50002">
    <property type="entry name" value="SH3"/>
    <property type="match status" value="1"/>
</dbReference>
<reference key="1">
    <citation type="journal article" date="2003" name="Endocrinology">
        <title>Isolation of the novel human guanine nucleotide exchange factor Src homology 3 domain-containing guanine nucleotide exchange factor (SGEF) and of C-terminal SGEF, an N-terminally truncated form of SGEF, the expression of which is regulated by androgen in prostate cancer cells.</title>
        <authorList>
            <person name="Qi H."/>
            <person name="Fournier A."/>
            <person name="Grenier J."/>
            <person name="Fillion C."/>
            <person name="Labrie Y."/>
            <person name="Labrie C."/>
        </authorList>
    </citation>
    <scope>NUCLEOTIDE SEQUENCE [MRNA] (ISOFORM 1)</scope>
    <scope>TISSUE SPECIFICITY</scope>
    <scope>INDUCTION</scope>
    <scope>VARIANT LEU-29</scope>
    <source>
        <tissue>Prostatic carcinoma</tissue>
    </source>
</reference>
<reference key="2">
    <citation type="journal article" date="2004" name="Mol. Biol. Cell">
        <title>SGEF, a RhoG guanine nucleotide exchange factor that stimulates macropinocytosis.</title>
        <authorList>
            <person name="Ellerbroek S.M."/>
            <person name="Wennerberg K."/>
            <person name="Arthur W.T."/>
            <person name="Dunty J.M."/>
            <person name="Bowman D.R."/>
            <person name="DeMali K.A."/>
            <person name="Der C."/>
            <person name="Burridge K."/>
        </authorList>
    </citation>
    <scope>NUCLEOTIDE SEQUENCE [MRNA] (ISOFORM 1)</scope>
    <scope>FUNCTION</scope>
    <scope>INTERACTION WITH RHOG</scope>
    <scope>TISSUE SPECIFICITY</scope>
    <scope>SUBCELLULAR LOCATION</scope>
    <scope>MUTAGENESIS OF TRP-826</scope>
    <scope>VARIANT LEU-29</scope>
    <source>
        <tissue>Brain</tissue>
    </source>
</reference>
<reference key="3">
    <citation type="journal article" date="2004" name="Nat. Genet.">
        <title>Complete sequencing and characterization of 21,243 full-length human cDNAs.</title>
        <authorList>
            <person name="Ota T."/>
            <person name="Suzuki Y."/>
            <person name="Nishikawa T."/>
            <person name="Otsuki T."/>
            <person name="Sugiyama T."/>
            <person name="Irie R."/>
            <person name="Wakamatsu A."/>
            <person name="Hayashi K."/>
            <person name="Sato H."/>
            <person name="Nagai K."/>
            <person name="Kimura K."/>
            <person name="Makita H."/>
            <person name="Sekine M."/>
            <person name="Obayashi M."/>
            <person name="Nishi T."/>
            <person name="Shibahara T."/>
            <person name="Tanaka T."/>
            <person name="Ishii S."/>
            <person name="Yamamoto J."/>
            <person name="Saito K."/>
            <person name="Kawai Y."/>
            <person name="Isono Y."/>
            <person name="Nakamura Y."/>
            <person name="Nagahari K."/>
            <person name="Murakami K."/>
            <person name="Yasuda T."/>
            <person name="Iwayanagi T."/>
            <person name="Wagatsuma M."/>
            <person name="Shiratori A."/>
            <person name="Sudo H."/>
            <person name="Hosoiri T."/>
            <person name="Kaku Y."/>
            <person name="Kodaira H."/>
            <person name="Kondo H."/>
            <person name="Sugawara M."/>
            <person name="Takahashi M."/>
            <person name="Kanda K."/>
            <person name="Yokoi T."/>
            <person name="Furuya T."/>
            <person name="Kikkawa E."/>
            <person name="Omura Y."/>
            <person name="Abe K."/>
            <person name="Kamihara K."/>
            <person name="Katsuta N."/>
            <person name="Sato K."/>
            <person name="Tanikawa M."/>
            <person name="Yamazaki M."/>
            <person name="Ninomiya K."/>
            <person name="Ishibashi T."/>
            <person name="Yamashita H."/>
            <person name="Murakawa K."/>
            <person name="Fujimori K."/>
            <person name="Tanai H."/>
            <person name="Kimata M."/>
            <person name="Watanabe M."/>
            <person name="Hiraoka S."/>
            <person name="Chiba Y."/>
            <person name="Ishida S."/>
            <person name="Ono Y."/>
            <person name="Takiguchi S."/>
            <person name="Watanabe S."/>
            <person name="Yosida M."/>
            <person name="Hotuta T."/>
            <person name="Kusano J."/>
            <person name="Kanehori K."/>
            <person name="Takahashi-Fujii A."/>
            <person name="Hara H."/>
            <person name="Tanase T.-O."/>
            <person name="Nomura Y."/>
            <person name="Togiya S."/>
            <person name="Komai F."/>
            <person name="Hara R."/>
            <person name="Takeuchi K."/>
            <person name="Arita M."/>
            <person name="Imose N."/>
            <person name="Musashino K."/>
            <person name="Yuuki H."/>
            <person name="Oshima A."/>
            <person name="Sasaki N."/>
            <person name="Aotsuka S."/>
            <person name="Yoshikawa Y."/>
            <person name="Matsunawa H."/>
            <person name="Ichihara T."/>
            <person name="Shiohata N."/>
            <person name="Sano S."/>
            <person name="Moriya S."/>
            <person name="Momiyama H."/>
            <person name="Satoh N."/>
            <person name="Takami S."/>
            <person name="Terashima Y."/>
            <person name="Suzuki O."/>
            <person name="Nakagawa S."/>
            <person name="Senoh A."/>
            <person name="Mizoguchi H."/>
            <person name="Goto Y."/>
            <person name="Shimizu F."/>
            <person name="Wakebe H."/>
            <person name="Hishigaki H."/>
            <person name="Watanabe T."/>
            <person name="Sugiyama A."/>
            <person name="Takemoto M."/>
            <person name="Kawakami B."/>
            <person name="Yamazaki M."/>
            <person name="Watanabe K."/>
            <person name="Kumagai A."/>
            <person name="Itakura S."/>
            <person name="Fukuzumi Y."/>
            <person name="Fujimori Y."/>
            <person name="Komiyama M."/>
            <person name="Tashiro H."/>
            <person name="Tanigami A."/>
            <person name="Fujiwara T."/>
            <person name="Ono T."/>
            <person name="Yamada K."/>
            <person name="Fujii Y."/>
            <person name="Ozaki K."/>
            <person name="Hirao M."/>
            <person name="Ohmori Y."/>
            <person name="Kawabata A."/>
            <person name="Hikiji T."/>
            <person name="Kobatake N."/>
            <person name="Inagaki H."/>
            <person name="Ikema Y."/>
            <person name="Okamoto S."/>
            <person name="Okitani R."/>
            <person name="Kawakami T."/>
            <person name="Noguchi S."/>
            <person name="Itoh T."/>
            <person name="Shigeta K."/>
            <person name="Senba T."/>
            <person name="Matsumura K."/>
            <person name="Nakajima Y."/>
            <person name="Mizuno T."/>
            <person name="Morinaga M."/>
            <person name="Sasaki M."/>
            <person name="Togashi T."/>
            <person name="Oyama M."/>
            <person name="Hata H."/>
            <person name="Watanabe M."/>
            <person name="Komatsu T."/>
            <person name="Mizushima-Sugano J."/>
            <person name="Satoh T."/>
            <person name="Shirai Y."/>
            <person name="Takahashi Y."/>
            <person name="Nakagawa K."/>
            <person name="Okumura K."/>
            <person name="Nagase T."/>
            <person name="Nomura N."/>
            <person name="Kikuchi H."/>
            <person name="Masuho Y."/>
            <person name="Yamashita R."/>
            <person name="Nakai K."/>
            <person name="Yada T."/>
            <person name="Nakamura Y."/>
            <person name="Ohara O."/>
            <person name="Isogai T."/>
            <person name="Sugano S."/>
        </authorList>
    </citation>
    <scope>NUCLEOTIDE SEQUENCE [LARGE SCALE MRNA] (ISOFORM 3)</scope>
    <scope>NUCLEOTIDE SEQUENCE [LARGE SCALE MRNA] OF 402-871 (ISOFORM 1)</scope>
    <scope>VARIANT LEU-29</scope>
</reference>
<reference key="4">
    <citation type="journal article" date="2004" name="Oncogene">
        <title>Expression profiling and differential screening between hepatoblastomas and the corresponding normal livers: identification of high expression of the PLK1 oncogene as a poor-prognostic indicator of hepatoblastomas.</title>
        <authorList>
            <person name="Yamada S."/>
            <person name="Ohira M."/>
            <person name="Horie H."/>
            <person name="Ando K."/>
            <person name="Takayasu H."/>
            <person name="Suzuki Y."/>
            <person name="Sugano S."/>
            <person name="Hirata T."/>
            <person name="Goto T."/>
            <person name="Matsunaga T."/>
            <person name="Hiyama E."/>
            <person name="Hayashi Y."/>
            <person name="Ando H."/>
            <person name="Suita S."/>
            <person name="Kaneko M."/>
            <person name="Sasaki F."/>
            <person name="Hashizume K."/>
            <person name="Ohnuma N."/>
            <person name="Nakagawara A."/>
        </authorList>
    </citation>
    <scope>NUCLEOTIDE SEQUENCE [LARGE SCALE MRNA] (ISOFORM 2)</scope>
    <scope>VARIANTS LEU-29; PRO-60 AND SER-203</scope>
    <source>
        <tissue>Liver</tissue>
    </source>
</reference>
<reference key="5">
    <citation type="journal article" date="2006" name="Nature">
        <title>The DNA sequence, annotation and analysis of human chromosome 3.</title>
        <authorList>
            <person name="Muzny D.M."/>
            <person name="Scherer S.E."/>
            <person name="Kaul R."/>
            <person name="Wang J."/>
            <person name="Yu J."/>
            <person name="Sudbrak R."/>
            <person name="Buhay C.J."/>
            <person name="Chen R."/>
            <person name="Cree A."/>
            <person name="Ding Y."/>
            <person name="Dugan-Rocha S."/>
            <person name="Gill R."/>
            <person name="Gunaratne P."/>
            <person name="Harris R.A."/>
            <person name="Hawes A.C."/>
            <person name="Hernandez J."/>
            <person name="Hodgson A.V."/>
            <person name="Hume J."/>
            <person name="Jackson A."/>
            <person name="Khan Z.M."/>
            <person name="Kovar-Smith C."/>
            <person name="Lewis L.R."/>
            <person name="Lozado R.J."/>
            <person name="Metzker M.L."/>
            <person name="Milosavljevic A."/>
            <person name="Miner G.R."/>
            <person name="Morgan M.B."/>
            <person name="Nazareth L.V."/>
            <person name="Scott G."/>
            <person name="Sodergren E."/>
            <person name="Song X.-Z."/>
            <person name="Steffen D."/>
            <person name="Wei S."/>
            <person name="Wheeler D.A."/>
            <person name="Wright M.W."/>
            <person name="Worley K.C."/>
            <person name="Yuan Y."/>
            <person name="Zhang Z."/>
            <person name="Adams C.Q."/>
            <person name="Ansari-Lari M.A."/>
            <person name="Ayele M."/>
            <person name="Brown M.J."/>
            <person name="Chen G."/>
            <person name="Chen Z."/>
            <person name="Clendenning J."/>
            <person name="Clerc-Blankenburg K.P."/>
            <person name="Chen R."/>
            <person name="Chen Z."/>
            <person name="Davis C."/>
            <person name="Delgado O."/>
            <person name="Dinh H.H."/>
            <person name="Dong W."/>
            <person name="Draper H."/>
            <person name="Ernst S."/>
            <person name="Fu G."/>
            <person name="Gonzalez-Garay M.L."/>
            <person name="Garcia D.K."/>
            <person name="Gillett W."/>
            <person name="Gu J."/>
            <person name="Hao B."/>
            <person name="Haugen E."/>
            <person name="Havlak P."/>
            <person name="He X."/>
            <person name="Hennig S."/>
            <person name="Hu S."/>
            <person name="Huang W."/>
            <person name="Jackson L.R."/>
            <person name="Jacob L.S."/>
            <person name="Kelly S.H."/>
            <person name="Kube M."/>
            <person name="Levy R."/>
            <person name="Li Z."/>
            <person name="Liu B."/>
            <person name="Liu J."/>
            <person name="Liu W."/>
            <person name="Lu J."/>
            <person name="Maheshwari M."/>
            <person name="Nguyen B.-V."/>
            <person name="Okwuonu G.O."/>
            <person name="Palmeiri A."/>
            <person name="Pasternak S."/>
            <person name="Perez L.M."/>
            <person name="Phelps K.A."/>
            <person name="Plopper F.J."/>
            <person name="Qiang B."/>
            <person name="Raymond C."/>
            <person name="Rodriguez R."/>
            <person name="Saenphimmachak C."/>
            <person name="Santibanez J."/>
            <person name="Shen H."/>
            <person name="Shen Y."/>
            <person name="Subramanian S."/>
            <person name="Tabor P.E."/>
            <person name="Verduzco D."/>
            <person name="Waldron L."/>
            <person name="Wang J."/>
            <person name="Wang J."/>
            <person name="Wang Q."/>
            <person name="Williams G.A."/>
            <person name="Wong G.K.-S."/>
            <person name="Yao Z."/>
            <person name="Zhang J."/>
            <person name="Zhang X."/>
            <person name="Zhao G."/>
            <person name="Zhou J."/>
            <person name="Zhou Y."/>
            <person name="Nelson D."/>
            <person name="Lehrach H."/>
            <person name="Reinhardt R."/>
            <person name="Naylor S.L."/>
            <person name="Yang H."/>
            <person name="Olson M."/>
            <person name="Weinstock G."/>
            <person name="Gibbs R.A."/>
        </authorList>
    </citation>
    <scope>NUCLEOTIDE SEQUENCE [LARGE SCALE GENOMIC DNA]</scope>
</reference>
<reference key="6">
    <citation type="journal article" date="2004" name="Genome Res.">
        <title>The status, quality, and expansion of the NIH full-length cDNA project: the Mammalian Gene Collection (MGC).</title>
        <authorList>
            <consortium name="The MGC Project Team"/>
        </authorList>
    </citation>
    <scope>NUCLEOTIDE SEQUENCE [LARGE SCALE MRNA] (ISOFORM 1)</scope>
    <scope>VARIANT LEU-29</scope>
    <source>
        <tissue>Prostate</tissue>
        <tissue>Testis</tissue>
    </source>
</reference>
<reference key="7">
    <citation type="journal article" date="2007" name="BMC Genomics">
        <title>The full-ORF clone resource of the German cDNA consortium.</title>
        <authorList>
            <person name="Bechtel S."/>
            <person name="Rosenfelder H."/>
            <person name="Duda A."/>
            <person name="Schmidt C.P."/>
            <person name="Ernst U."/>
            <person name="Wellenreuther R."/>
            <person name="Mehrle A."/>
            <person name="Schuster C."/>
            <person name="Bahr A."/>
            <person name="Bloecker H."/>
            <person name="Heubner D."/>
            <person name="Hoerlein A."/>
            <person name="Michel G."/>
            <person name="Wedler H."/>
            <person name="Koehrer K."/>
            <person name="Ottenwaelder B."/>
            <person name="Poustka A."/>
            <person name="Wiemann S."/>
            <person name="Schupp I."/>
        </authorList>
    </citation>
    <scope>NUCLEOTIDE SEQUENCE [LARGE SCALE MRNA] OF 661-871 (ISOFORM 1)</scope>
    <source>
        <tissue>Testis</tissue>
    </source>
</reference>
<reference key="8">
    <citation type="journal article" date="2006" name="J. Cell Biol.">
        <title>Differential activation and function of Rho GTPases during Salmonella-host cell interactions.</title>
        <authorList>
            <person name="Patel J.C."/>
            <person name="Galan J.E."/>
        </authorList>
    </citation>
    <scope>FUNCTION</scope>
</reference>
<reference key="9">
    <citation type="journal article" date="2007" name="J. Cell Biol.">
        <title>RhoG regulates endothelial apical cup assembly downstream from ICAM1 engagement and is involved in leukocyte trans-endothelial migration.</title>
        <authorList>
            <person name="van Buul J.D."/>
            <person name="Allingham M.J."/>
            <person name="Samson T."/>
            <person name="Meller J."/>
            <person name="Boulter E."/>
            <person name="Garcia-Mata R."/>
            <person name="Burridge K."/>
        </authorList>
    </citation>
    <scope>FUNCTION</scope>
    <scope>INTERACTION WITH ICAM1</scope>
    <scope>SUBCELLULAR LOCATION</scope>
</reference>
<reference key="10">
    <citation type="journal article" date="2009" name="Sci. Signal.">
        <title>Quantitative phosphoproteomic analysis of T cell receptor signaling reveals system-wide modulation of protein-protein interactions.</title>
        <authorList>
            <person name="Mayya V."/>
            <person name="Lundgren D.H."/>
            <person name="Hwang S.-I."/>
            <person name="Rezaul K."/>
            <person name="Wu L."/>
            <person name="Eng J.K."/>
            <person name="Rodionov V."/>
            <person name="Han D.K."/>
        </authorList>
    </citation>
    <scope>PHOSPHORYLATION [LARGE SCALE ANALYSIS] AT SER-392</scope>
    <scope>IDENTIFICATION BY MASS SPECTROMETRY [LARGE SCALE ANALYSIS]</scope>
    <source>
        <tissue>Leukemic T-cell</tissue>
    </source>
</reference>
<reference key="11">
    <citation type="journal article" date="2011" name="Sci. Signal.">
        <title>System-wide temporal characterization of the proteome and phosphoproteome of human embryonic stem cell differentiation.</title>
        <authorList>
            <person name="Rigbolt K.T."/>
            <person name="Prokhorova T.A."/>
            <person name="Akimov V."/>
            <person name="Henningsen J."/>
            <person name="Johansen P.T."/>
            <person name="Kratchmarova I."/>
            <person name="Kassem M."/>
            <person name="Mann M."/>
            <person name="Olsen J.V."/>
            <person name="Blagoev B."/>
        </authorList>
    </citation>
    <scope>PHOSPHORYLATION [LARGE SCALE ANALYSIS] AT SER-22 AND SER-392</scope>
    <scope>VARIANT [LARGE SCALE ANALYSIS] LEU-29</scope>
    <scope>IDENTIFICATION BY MASS SPECTROMETRY [LARGE SCALE ANALYSIS]</scope>
</reference>
<reference key="12">
    <citation type="journal article" date="2014" name="J. Proteomics">
        <title>An enzyme assisted RP-RPLC approach for in-depth analysis of human liver phosphoproteome.</title>
        <authorList>
            <person name="Bian Y."/>
            <person name="Song C."/>
            <person name="Cheng K."/>
            <person name="Dong M."/>
            <person name="Wang F."/>
            <person name="Huang J."/>
            <person name="Sun D."/>
            <person name="Wang L."/>
            <person name="Ye M."/>
            <person name="Zou H."/>
        </authorList>
    </citation>
    <scope>PHOSPHORYLATION [LARGE SCALE ANALYSIS] AT SER-392</scope>
    <scope>IDENTIFICATION BY MASS SPECTROMETRY [LARGE SCALE ANALYSIS]</scope>
    <source>
        <tissue>Liver</tissue>
    </source>
</reference>
<protein>
    <recommendedName>
        <fullName>Rho guanine nucleotide exchange factor 26</fullName>
    </recommendedName>
    <alternativeName>
        <fullName>SH3 domain-containing guanine exchange factor</fullName>
    </alternativeName>
</protein>
<sequence>MDGESEVDFSSNSITPLWRRRSIPQPHQVLGRSKPRPQSYQSPNGLLITDFPVEDGGTLLAAQIPAQVPTASDSRTVHRSPLLLGAQRRAVANGGTASPEYRAASPRLRRPKSPKLPKAVPGGSPKSPANGAVTLPAPPPPPVLRPPRTPNAPAPCTPEEDLTGLTASPVPSPTANGLAANNDSPGSGSQSGRKAKDPERGLFPGPQKSSSEQKLPLQRLPSQENELLENPSVVLSTNSPAALKVGKQQIIPKSLASEIKISKSNNQNVEPHKRLLKVRSMVEGLGGPLGHAGEESEVDNDVDSPGSLRRGLRSTSYRRAVVSGFDFDSPTSSKKKNRMSQPVLKVVMEDKEKFSSLGRIKKKMLKGQGTFDGEENAVLYQNYKEKALDIDSDEESEPKEQKSDEKIVIHHKPLRSTWSQLSAVKRKGLSQTVSQEERKRQEAIFEVISSEHSYLLSLEILIRMFKNSKELSDTMTKTERHHLFSNITDVCEASKKFFIELEARHQNNIFIDDISDIVEKHTASTFDPYVKYCTNEVYQQRTLQKLLATNPSFKEVLSRIESHEDCRNLPMISFLILPMQRVTRLPLLMDTICQKTPKDSPKYEVCKRALKEVSKLVRLCNEGARKMERTEMMYTINSQLEFKIKPFPLVSSSRWLVKRGELTAYVEDTVLFSRRTSKQQVYFFLFNDVLIITKKKSEESYNVNDYSLRDQLLVESCDNEELNSSPGKNSSTMLYSRQSSASHLFTLTVLSNHANEKVEMLLGAETQSERARWITALGHSSGKPPADRTSLTQVEIVRSFTAKQPDELSLQVADVVLIYQRVSDGWYEGERLRDGERGWFPMECAKEITCQATIDKNVERMGRLLGLETNV</sequence>
<name>ARHGQ_HUMAN</name>
<keyword id="KW-0002">3D-structure</keyword>
<keyword id="KW-0025">Alternative splicing</keyword>
<keyword id="KW-0966">Cell projection</keyword>
<keyword id="KW-0344">Guanine-nucleotide releasing factor</keyword>
<keyword id="KW-0597">Phosphoprotein</keyword>
<keyword id="KW-1267">Proteomics identification</keyword>
<keyword id="KW-1185">Reference proteome</keyword>
<keyword id="KW-0728">SH3 domain</keyword>
<proteinExistence type="evidence at protein level"/>
<organism>
    <name type="scientific">Homo sapiens</name>
    <name type="common">Human</name>
    <dbReference type="NCBI Taxonomy" id="9606"/>
    <lineage>
        <taxon>Eukaryota</taxon>
        <taxon>Metazoa</taxon>
        <taxon>Chordata</taxon>
        <taxon>Craniata</taxon>
        <taxon>Vertebrata</taxon>
        <taxon>Euteleostomi</taxon>
        <taxon>Mammalia</taxon>
        <taxon>Eutheria</taxon>
        <taxon>Euarchontoglires</taxon>
        <taxon>Primates</taxon>
        <taxon>Haplorrhini</taxon>
        <taxon>Catarrhini</taxon>
        <taxon>Hominidae</taxon>
        <taxon>Homo</taxon>
    </lineage>
</organism>